<protein>
    <recommendedName>
        <fullName evidence="1">Small ribosomal subunit protein uS11c</fullName>
    </recommendedName>
    <alternativeName>
        <fullName evidence="2">30S ribosomal protein S11, chloroplastic</fullName>
    </alternativeName>
</protein>
<proteinExistence type="inferred from homology"/>
<gene>
    <name evidence="1" type="primary">rps11</name>
    <name type="ordered locus">Grc000081</name>
</gene>
<sequence>MARQIRKTHAKQKKNIINGITHIKSTFNNTLITITDLKGSTLSWSSAGASGFKGTKKGTPFAAQIAAEKAAKQAIEQGIRQTEVLVNGPGAGRETAIRALQATGINITLIKDITPIPHNGCRPPKKRRV</sequence>
<geneLocation type="chloroplast"/>
<organism>
    <name type="scientific">Gracilaria tenuistipitata var. liui</name>
    <name type="common">Red alga</name>
    <dbReference type="NCBI Taxonomy" id="285951"/>
    <lineage>
        <taxon>Eukaryota</taxon>
        <taxon>Rhodophyta</taxon>
        <taxon>Florideophyceae</taxon>
        <taxon>Rhodymeniophycidae</taxon>
        <taxon>Gracilariales</taxon>
        <taxon>Gracilariaceae</taxon>
        <taxon>Gracilaria</taxon>
        <taxon>Gracilaria tenuistipitata</taxon>
    </lineage>
</organism>
<reference key="1">
    <citation type="journal article" date="2004" name="J. Mol. Evol.">
        <title>Comparative analysis of the complete plastid genome sequence of the red alga Gracilaria tenuistipitata var. liui provides insights into the evolution of rhodoplasts and their relationship to other plastids.</title>
        <authorList>
            <person name="Hagopian J.C."/>
            <person name="Reis M."/>
            <person name="Kitajima J.P."/>
            <person name="Bhattacharya D."/>
            <person name="de Oliveira M.C."/>
        </authorList>
    </citation>
    <scope>NUCLEOTIDE SEQUENCE [LARGE SCALE GENOMIC DNA]</scope>
</reference>
<keyword id="KW-0150">Chloroplast</keyword>
<keyword id="KW-0934">Plastid</keyword>
<keyword id="KW-0687">Ribonucleoprotein</keyword>
<keyword id="KW-0689">Ribosomal protein</keyword>
<keyword id="KW-0694">RNA-binding</keyword>
<keyword id="KW-0699">rRNA-binding</keyword>
<comment type="subunit">
    <text evidence="1">Part of the 30S ribosomal subunit.</text>
</comment>
<comment type="subcellular location">
    <subcellularLocation>
        <location>Plastid</location>
        <location>Chloroplast</location>
    </subcellularLocation>
</comment>
<comment type="similarity">
    <text evidence="1">Belongs to the universal ribosomal protein uS11 family.</text>
</comment>
<dbReference type="EMBL" id="AY673996">
    <property type="protein sequence ID" value="AAT79662.1"/>
    <property type="molecule type" value="Genomic_DNA"/>
</dbReference>
<dbReference type="RefSeq" id="YP_063587.1">
    <property type="nucleotide sequence ID" value="NC_006137.1"/>
</dbReference>
<dbReference type="SMR" id="Q6B8X3"/>
<dbReference type="GeneID" id="2943968"/>
<dbReference type="GO" id="GO:0009507">
    <property type="term" value="C:chloroplast"/>
    <property type="evidence" value="ECO:0007669"/>
    <property type="project" value="UniProtKB-SubCell"/>
</dbReference>
<dbReference type="GO" id="GO:1990904">
    <property type="term" value="C:ribonucleoprotein complex"/>
    <property type="evidence" value="ECO:0007669"/>
    <property type="project" value="UniProtKB-KW"/>
</dbReference>
<dbReference type="GO" id="GO:0005840">
    <property type="term" value="C:ribosome"/>
    <property type="evidence" value="ECO:0007669"/>
    <property type="project" value="UniProtKB-KW"/>
</dbReference>
<dbReference type="GO" id="GO:0019843">
    <property type="term" value="F:rRNA binding"/>
    <property type="evidence" value="ECO:0007669"/>
    <property type="project" value="UniProtKB-UniRule"/>
</dbReference>
<dbReference type="GO" id="GO:0003735">
    <property type="term" value="F:structural constituent of ribosome"/>
    <property type="evidence" value="ECO:0007669"/>
    <property type="project" value="InterPro"/>
</dbReference>
<dbReference type="GO" id="GO:0006412">
    <property type="term" value="P:translation"/>
    <property type="evidence" value="ECO:0007669"/>
    <property type="project" value="UniProtKB-UniRule"/>
</dbReference>
<dbReference type="FunFam" id="3.30.420.80:FF:000001">
    <property type="entry name" value="30S ribosomal protein S11"/>
    <property type="match status" value="1"/>
</dbReference>
<dbReference type="Gene3D" id="3.30.420.80">
    <property type="entry name" value="Ribosomal protein S11"/>
    <property type="match status" value="1"/>
</dbReference>
<dbReference type="HAMAP" id="MF_01310">
    <property type="entry name" value="Ribosomal_uS11"/>
    <property type="match status" value="1"/>
</dbReference>
<dbReference type="InterPro" id="IPR001971">
    <property type="entry name" value="Ribosomal_uS11"/>
</dbReference>
<dbReference type="InterPro" id="IPR019981">
    <property type="entry name" value="Ribosomal_uS11_bac-type"/>
</dbReference>
<dbReference type="InterPro" id="IPR018102">
    <property type="entry name" value="Ribosomal_uS11_CS"/>
</dbReference>
<dbReference type="InterPro" id="IPR036967">
    <property type="entry name" value="Ribosomal_uS11_sf"/>
</dbReference>
<dbReference type="NCBIfam" id="NF003698">
    <property type="entry name" value="PRK05309.1"/>
    <property type="match status" value="1"/>
</dbReference>
<dbReference type="NCBIfam" id="TIGR03632">
    <property type="entry name" value="uS11_bact"/>
    <property type="match status" value="1"/>
</dbReference>
<dbReference type="PANTHER" id="PTHR11759">
    <property type="entry name" value="40S RIBOSOMAL PROTEIN S14/30S RIBOSOMAL PROTEIN S11"/>
    <property type="match status" value="1"/>
</dbReference>
<dbReference type="Pfam" id="PF00411">
    <property type="entry name" value="Ribosomal_S11"/>
    <property type="match status" value="1"/>
</dbReference>
<dbReference type="PIRSF" id="PIRSF002131">
    <property type="entry name" value="Ribosomal_S11"/>
    <property type="match status" value="1"/>
</dbReference>
<dbReference type="SUPFAM" id="SSF53137">
    <property type="entry name" value="Translational machinery components"/>
    <property type="match status" value="1"/>
</dbReference>
<dbReference type="PROSITE" id="PS00054">
    <property type="entry name" value="RIBOSOMAL_S11"/>
    <property type="match status" value="1"/>
</dbReference>
<accession>Q6B8X3</accession>
<evidence type="ECO:0000255" key="1">
    <source>
        <dbReference type="HAMAP-Rule" id="MF_01310"/>
    </source>
</evidence>
<evidence type="ECO:0000305" key="2"/>
<name>RR11_GRATL</name>
<feature type="chain" id="PRO_0000123302" description="Small ribosomal subunit protein uS11c">
    <location>
        <begin position="1"/>
        <end position="129"/>
    </location>
</feature>